<protein>
    <recommendedName>
        <fullName evidence="1">Large ribosomal subunit protein uL2</fullName>
    </recommendedName>
    <alternativeName>
        <fullName evidence="3">50S ribosomal protein L2</fullName>
    </alternativeName>
</protein>
<keyword id="KW-1185">Reference proteome</keyword>
<keyword id="KW-0687">Ribonucleoprotein</keyword>
<keyword id="KW-0689">Ribosomal protein</keyword>
<keyword id="KW-0694">RNA-binding</keyword>
<keyword id="KW-0699">rRNA-binding</keyword>
<dbReference type="EMBL" id="CP000612">
    <property type="protein sequence ID" value="ABO48767.1"/>
    <property type="molecule type" value="Genomic_DNA"/>
</dbReference>
<dbReference type="RefSeq" id="WP_011876607.1">
    <property type="nucleotide sequence ID" value="NC_009253.1"/>
</dbReference>
<dbReference type="SMR" id="A4J114"/>
<dbReference type="STRING" id="349161.Dred_0218"/>
<dbReference type="KEGG" id="drm:Dred_0218"/>
<dbReference type="eggNOG" id="COG0090">
    <property type="taxonomic scope" value="Bacteria"/>
</dbReference>
<dbReference type="HOGENOM" id="CLU_036235_2_1_9"/>
<dbReference type="OrthoDB" id="9778722at2"/>
<dbReference type="Proteomes" id="UP000001556">
    <property type="component" value="Chromosome"/>
</dbReference>
<dbReference type="GO" id="GO:0015934">
    <property type="term" value="C:large ribosomal subunit"/>
    <property type="evidence" value="ECO:0007669"/>
    <property type="project" value="InterPro"/>
</dbReference>
<dbReference type="GO" id="GO:0019843">
    <property type="term" value="F:rRNA binding"/>
    <property type="evidence" value="ECO:0007669"/>
    <property type="project" value="UniProtKB-UniRule"/>
</dbReference>
<dbReference type="GO" id="GO:0003735">
    <property type="term" value="F:structural constituent of ribosome"/>
    <property type="evidence" value="ECO:0007669"/>
    <property type="project" value="InterPro"/>
</dbReference>
<dbReference type="GO" id="GO:0016740">
    <property type="term" value="F:transferase activity"/>
    <property type="evidence" value="ECO:0007669"/>
    <property type="project" value="InterPro"/>
</dbReference>
<dbReference type="GO" id="GO:0002181">
    <property type="term" value="P:cytoplasmic translation"/>
    <property type="evidence" value="ECO:0007669"/>
    <property type="project" value="TreeGrafter"/>
</dbReference>
<dbReference type="FunFam" id="2.30.30.30:FF:000001">
    <property type="entry name" value="50S ribosomal protein L2"/>
    <property type="match status" value="1"/>
</dbReference>
<dbReference type="FunFam" id="2.40.50.140:FF:000003">
    <property type="entry name" value="50S ribosomal protein L2"/>
    <property type="match status" value="1"/>
</dbReference>
<dbReference type="FunFam" id="4.10.950.10:FF:000001">
    <property type="entry name" value="50S ribosomal protein L2"/>
    <property type="match status" value="1"/>
</dbReference>
<dbReference type="Gene3D" id="2.30.30.30">
    <property type="match status" value="1"/>
</dbReference>
<dbReference type="Gene3D" id="2.40.50.140">
    <property type="entry name" value="Nucleic acid-binding proteins"/>
    <property type="match status" value="1"/>
</dbReference>
<dbReference type="Gene3D" id="4.10.950.10">
    <property type="entry name" value="Ribosomal protein L2, domain 3"/>
    <property type="match status" value="1"/>
</dbReference>
<dbReference type="HAMAP" id="MF_01320_B">
    <property type="entry name" value="Ribosomal_uL2_B"/>
    <property type="match status" value="1"/>
</dbReference>
<dbReference type="InterPro" id="IPR012340">
    <property type="entry name" value="NA-bd_OB-fold"/>
</dbReference>
<dbReference type="InterPro" id="IPR014722">
    <property type="entry name" value="Rib_uL2_dom2"/>
</dbReference>
<dbReference type="InterPro" id="IPR002171">
    <property type="entry name" value="Ribosomal_uL2"/>
</dbReference>
<dbReference type="InterPro" id="IPR005880">
    <property type="entry name" value="Ribosomal_uL2_bac/org-type"/>
</dbReference>
<dbReference type="InterPro" id="IPR022669">
    <property type="entry name" value="Ribosomal_uL2_C"/>
</dbReference>
<dbReference type="InterPro" id="IPR014726">
    <property type="entry name" value="Ribosomal_uL2_dom3"/>
</dbReference>
<dbReference type="InterPro" id="IPR022666">
    <property type="entry name" value="Ribosomal_uL2_RNA-bd_dom"/>
</dbReference>
<dbReference type="InterPro" id="IPR008991">
    <property type="entry name" value="Translation_prot_SH3-like_sf"/>
</dbReference>
<dbReference type="NCBIfam" id="TIGR01171">
    <property type="entry name" value="rplB_bact"/>
    <property type="match status" value="1"/>
</dbReference>
<dbReference type="PANTHER" id="PTHR13691:SF5">
    <property type="entry name" value="LARGE RIBOSOMAL SUBUNIT PROTEIN UL2M"/>
    <property type="match status" value="1"/>
</dbReference>
<dbReference type="PANTHER" id="PTHR13691">
    <property type="entry name" value="RIBOSOMAL PROTEIN L2"/>
    <property type="match status" value="1"/>
</dbReference>
<dbReference type="Pfam" id="PF00181">
    <property type="entry name" value="Ribosomal_L2"/>
    <property type="match status" value="1"/>
</dbReference>
<dbReference type="Pfam" id="PF03947">
    <property type="entry name" value="Ribosomal_L2_C"/>
    <property type="match status" value="1"/>
</dbReference>
<dbReference type="PIRSF" id="PIRSF002158">
    <property type="entry name" value="Ribosomal_L2"/>
    <property type="match status" value="1"/>
</dbReference>
<dbReference type="SMART" id="SM01383">
    <property type="entry name" value="Ribosomal_L2"/>
    <property type="match status" value="1"/>
</dbReference>
<dbReference type="SMART" id="SM01382">
    <property type="entry name" value="Ribosomal_L2_C"/>
    <property type="match status" value="1"/>
</dbReference>
<dbReference type="SUPFAM" id="SSF50249">
    <property type="entry name" value="Nucleic acid-binding proteins"/>
    <property type="match status" value="1"/>
</dbReference>
<dbReference type="SUPFAM" id="SSF50104">
    <property type="entry name" value="Translation proteins SH3-like domain"/>
    <property type="match status" value="1"/>
</dbReference>
<comment type="function">
    <text evidence="1">One of the primary rRNA binding proteins. Required for association of the 30S and 50S subunits to form the 70S ribosome, for tRNA binding and peptide bond formation. It has been suggested to have peptidyltransferase activity; this is somewhat controversial. Makes several contacts with the 16S rRNA in the 70S ribosome.</text>
</comment>
<comment type="subunit">
    <text evidence="1">Part of the 50S ribosomal subunit. Forms a bridge to the 30S subunit in the 70S ribosome.</text>
</comment>
<comment type="similarity">
    <text evidence="1">Belongs to the universal ribosomal protein uL2 family.</text>
</comment>
<name>RL2_DESRM</name>
<feature type="chain" id="PRO_1000073228" description="Large ribosomal subunit protein uL2">
    <location>
        <begin position="1"/>
        <end position="275"/>
    </location>
</feature>
<feature type="region of interest" description="Disordered" evidence="2">
    <location>
        <begin position="222"/>
        <end position="275"/>
    </location>
</feature>
<sequence length="275" mass="30076">MAVKNYKPTSPGRRFVTFSDFSEITKVEPEKSLLEPIKKTGGRNAQGRLTVRHQGGGHKRMFRIIDFKRNKDGIPAKVASIEYDPNRSARIALLNYADGEKRYILAPVGLEVGVIVESGPDADIKVGNCLPLRNIPVGTMVHNIELYPGAGAQMVRSAGAAAQLMAKEGKYANLRLPSGEMRLVLQECRATIGQVGNLEHENVTIGKAGRSRHLGIRPTVRGKVMNPVDHPHGGGEGRNPIGRNPSTPWGKLAMGVKTRGNKKSDRLIVKRRNKK</sequence>
<accession>A4J114</accession>
<proteinExistence type="inferred from homology"/>
<gene>
    <name evidence="1" type="primary">rplB</name>
    <name type="ordered locus">Dred_0218</name>
</gene>
<organism>
    <name type="scientific">Desulforamulus reducens (strain ATCC BAA-1160 / DSM 100696 / MI-1)</name>
    <name type="common">Desulfotomaculum reducens</name>
    <dbReference type="NCBI Taxonomy" id="349161"/>
    <lineage>
        <taxon>Bacteria</taxon>
        <taxon>Bacillati</taxon>
        <taxon>Bacillota</taxon>
        <taxon>Clostridia</taxon>
        <taxon>Eubacteriales</taxon>
        <taxon>Peptococcaceae</taxon>
        <taxon>Desulforamulus</taxon>
    </lineage>
</organism>
<reference key="1">
    <citation type="submission" date="2007-03" db="EMBL/GenBank/DDBJ databases">
        <title>Complete sequence of Desulfotomaculum reducens MI-1.</title>
        <authorList>
            <consortium name="US DOE Joint Genome Institute"/>
            <person name="Copeland A."/>
            <person name="Lucas S."/>
            <person name="Lapidus A."/>
            <person name="Barry K."/>
            <person name="Detter J.C."/>
            <person name="Glavina del Rio T."/>
            <person name="Hammon N."/>
            <person name="Israni S."/>
            <person name="Dalin E."/>
            <person name="Tice H."/>
            <person name="Pitluck S."/>
            <person name="Sims D."/>
            <person name="Brettin T."/>
            <person name="Bruce D."/>
            <person name="Han C."/>
            <person name="Tapia R."/>
            <person name="Schmutz J."/>
            <person name="Larimer F."/>
            <person name="Land M."/>
            <person name="Hauser L."/>
            <person name="Kyrpides N."/>
            <person name="Kim E."/>
            <person name="Tebo B.M."/>
            <person name="Richardson P."/>
        </authorList>
    </citation>
    <scope>NUCLEOTIDE SEQUENCE [LARGE SCALE GENOMIC DNA]</scope>
    <source>
        <strain>ATCC BAA-1160 / DSM 100696 / MI-1</strain>
    </source>
</reference>
<evidence type="ECO:0000255" key="1">
    <source>
        <dbReference type="HAMAP-Rule" id="MF_01320"/>
    </source>
</evidence>
<evidence type="ECO:0000256" key="2">
    <source>
        <dbReference type="SAM" id="MobiDB-lite"/>
    </source>
</evidence>
<evidence type="ECO:0000305" key="3"/>